<keyword id="KW-0325">Glycoprotein</keyword>
<keyword id="KW-0472">Membrane</keyword>
<keyword id="KW-1185">Reference proteome</keyword>
<keyword id="KW-0812">Transmembrane</keyword>
<keyword id="KW-1133">Transmembrane helix</keyword>
<evidence type="ECO:0000255" key="1"/>
<evidence type="ECO:0000256" key="2">
    <source>
        <dbReference type="SAM" id="MobiDB-lite"/>
    </source>
</evidence>
<evidence type="ECO:0000305" key="3"/>
<name>TEDM1_RAT</name>
<comment type="subcellular location">
    <subcellularLocation>
        <location evidence="3">Membrane</location>
        <topology evidence="3">Multi-pass membrane protein</topology>
    </subcellularLocation>
</comment>
<comment type="similarity">
    <text evidence="3">Belongs to the TMEM45 family.</text>
</comment>
<gene>
    <name type="primary">Teddm1</name>
</gene>
<protein>
    <recommendedName>
        <fullName>Transmembrane epididymal protein 1</fullName>
    </recommendedName>
</protein>
<organism>
    <name type="scientific">Rattus norvegicus</name>
    <name type="common">Rat</name>
    <dbReference type="NCBI Taxonomy" id="10116"/>
    <lineage>
        <taxon>Eukaryota</taxon>
        <taxon>Metazoa</taxon>
        <taxon>Chordata</taxon>
        <taxon>Craniata</taxon>
        <taxon>Vertebrata</taxon>
        <taxon>Euteleostomi</taxon>
        <taxon>Mammalia</taxon>
        <taxon>Eutheria</taxon>
        <taxon>Euarchontoglires</taxon>
        <taxon>Glires</taxon>
        <taxon>Rodentia</taxon>
        <taxon>Myomorpha</taxon>
        <taxon>Muroidea</taxon>
        <taxon>Muridae</taxon>
        <taxon>Murinae</taxon>
        <taxon>Rattus</taxon>
    </lineage>
</organism>
<reference key="1">
    <citation type="submission" date="2002-11" db="EMBL/GenBank/DDBJ databases">
        <title>Novel epididymis-specific mRNAs down-regulated by HE6/Gpr64 receptor gene disruption.</title>
        <authorList>
            <person name="Davies B."/>
            <person name="Davies M."/>
            <person name="Obermann H."/>
            <person name="Spiess A.N."/>
            <person name="Kirchhoff C."/>
        </authorList>
    </citation>
    <scope>NUCLEOTIDE SEQUENCE [MRNA]</scope>
    <source>
        <strain>Lewis</strain>
        <tissue>Epididymis</tissue>
    </source>
</reference>
<sequence>MGDFIGHISPGLFLVFYGLYQAIIVSRALILNDSLLYPSYLSKNKGKWARLWQIAHAGWLKVVSGSLLIVYELNCVDEGLTFMTKMIPPRFMYPKEWQHLTMFILLTLDGCVEVVSRSVLRQRLVLLERGATVLGVYVLLLLLVSHVKDSSGVELQVHSLLILVVFLLMLVLTAELWAPEMVHLWVIETFLFLTMGSWLMQAAFILFRPVSGFPWEDDDISNIMLVTTFFCWHVMINALCMLGIYGISSFWHRCYRTGLMPMGSKEVLYHKSSEGTFYKLLQKAEQQDRDDQAPLLSKSSPCDRA</sequence>
<dbReference type="EMBL" id="AJ515382">
    <property type="protein sequence ID" value="CAD56346.1"/>
    <property type="molecule type" value="mRNA"/>
</dbReference>
<dbReference type="RefSeq" id="NP_001035004.1">
    <property type="nucleotide sequence ID" value="NM_001039915.2"/>
</dbReference>
<dbReference type="SMR" id="Q8CHM9"/>
<dbReference type="STRING" id="10116.ENSRNOP00000064589"/>
<dbReference type="GlyCosmos" id="Q8CHM9">
    <property type="glycosylation" value="1 site, No reported glycans"/>
</dbReference>
<dbReference type="GlyGen" id="Q8CHM9">
    <property type="glycosylation" value="1 site"/>
</dbReference>
<dbReference type="PaxDb" id="10116-ENSRNOP00000064589"/>
<dbReference type="GeneID" id="664710"/>
<dbReference type="KEGG" id="rno:664710"/>
<dbReference type="AGR" id="RGD:1593124"/>
<dbReference type="CTD" id="240819"/>
<dbReference type="RGD" id="1593124">
    <property type="gene designation" value="Teddm1"/>
</dbReference>
<dbReference type="eggNOG" id="ENOG502QS1R">
    <property type="taxonomic scope" value="Eukaryota"/>
</dbReference>
<dbReference type="InParanoid" id="Q8CHM9"/>
<dbReference type="PhylomeDB" id="Q8CHM9"/>
<dbReference type="PRO" id="PR:Q8CHM9"/>
<dbReference type="Proteomes" id="UP000002494">
    <property type="component" value="Unplaced"/>
</dbReference>
<dbReference type="GO" id="GO:0016020">
    <property type="term" value="C:membrane"/>
    <property type="evidence" value="ECO:0007669"/>
    <property type="project" value="UniProtKB-SubCell"/>
</dbReference>
<dbReference type="InterPro" id="IPR006904">
    <property type="entry name" value="DUF716"/>
</dbReference>
<dbReference type="PANTHER" id="PTHR46441">
    <property type="entry name" value="TRANSMEMBRANE EPIDIDYMAL FAMILY MEMBER 3"/>
    <property type="match status" value="1"/>
</dbReference>
<dbReference type="PANTHER" id="PTHR46441:SF4">
    <property type="entry name" value="TRANSMEMBRANE EPIDIDYMAL PROTEIN 1A"/>
    <property type="match status" value="1"/>
</dbReference>
<dbReference type="Pfam" id="PF04819">
    <property type="entry name" value="DUF716"/>
    <property type="match status" value="1"/>
</dbReference>
<feature type="chain" id="PRO_0000307131" description="Transmembrane epididymal protein 1">
    <location>
        <begin position="1"/>
        <end position="305"/>
    </location>
</feature>
<feature type="transmembrane region" description="Helical" evidence="1">
    <location>
        <begin position="4"/>
        <end position="24"/>
    </location>
</feature>
<feature type="transmembrane region" description="Helical" evidence="1">
    <location>
        <begin position="51"/>
        <end position="71"/>
    </location>
</feature>
<feature type="transmembrane region" description="Helical" evidence="1">
    <location>
        <begin position="100"/>
        <end position="120"/>
    </location>
</feature>
<feature type="transmembrane region" description="Helical" evidence="1">
    <location>
        <begin position="124"/>
        <end position="144"/>
    </location>
</feature>
<feature type="transmembrane region" description="Helical" evidence="1">
    <location>
        <begin position="159"/>
        <end position="179"/>
    </location>
</feature>
<feature type="transmembrane region" description="Helical" evidence="1">
    <location>
        <begin position="187"/>
        <end position="207"/>
    </location>
</feature>
<feature type="transmembrane region" description="Helical" evidence="1">
    <location>
        <begin position="223"/>
        <end position="243"/>
    </location>
</feature>
<feature type="region of interest" description="Disordered" evidence="2">
    <location>
        <begin position="285"/>
        <end position="305"/>
    </location>
</feature>
<feature type="glycosylation site" description="N-linked (GlcNAc...) asparagine" evidence="1">
    <location>
        <position position="32"/>
    </location>
</feature>
<accession>Q8CHM9</accession>
<proteinExistence type="evidence at transcript level"/>